<protein>
    <recommendedName>
        <fullName>Transcription factor AP-2-beta</fullName>
        <shortName>AP2-beta</shortName>
    </recommendedName>
    <alternativeName>
        <fullName>Activating enhancer-binding protein 2-beta</fullName>
    </alternativeName>
</protein>
<comment type="function">
    <text evidence="3">Sequence-specific DNA-binding protein that interacts with inducible viral and cellular enhancer elements to regulate transcription of selected genes. AP-2 factors bind to the consensus sequence 5'-GCCNNNGGC-3' and activate genes involved in a large spectrum of important biological functions including proper eye, face, body wall, limb and neural tube development. They also suppress a number of genes including MCAM/MUC18, C/EBP alpha and MYC. AP-2-beta appears to be required for normal face and limb development and for proper terminal differentiation and function of renal tubular epithelia (By similarity).</text>
</comment>
<comment type="subunit">
    <text evidence="3">Binds DNA as a dimer. Can form homodimers or heterodimers with other AP-2 family members. Interacts with CITED4. Interacts with UBE2I. Interacts with KCTD1; this interaction represses transcription activation. Interacts with CITED2 (via C-terminus); the interaction stimulates TFAP2B-transcriptional activity (By similarity).</text>
</comment>
<comment type="subcellular location">
    <subcellularLocation>
        <location evidence="2">Nucleus</location>
    </subcellularLocation>
    <text evidence="2">In the brain, localizes to the arcuate hypothalamic nucleus, the ventromedial hypothalamic nucleus and the accumbens nucleus of the ventral striatum.</text>
</comment>
<comment type="PTM">
    <text evidence="1">Sumoylated on Lys-21; which inhibits transcriptional activity.</text>
</comment>
<comment type="similarity">
    <text evidence="5">Belongs to the AP-2 family.</text>
</comment>
<comment type="sequence caution" evidence="5">
    <conflict type="erroneous initiation">
        <sequence resource="EMBL-CDS" id="BAC80223"/>
    </conflict>
    <text>Truncated N-terminus.</text>
</comment>
<feature type="chain" id="PRO_0000184800" description="Transcription factor AP-2-beta">
    <location>
        <begin position="1"/>
        <end position="460"/>
    </location>
</feature>
<feature type="region of interest" description="Disordered" evidence="4">
    <location>
        <begin position="30"/>
        <end position="139"/>
    </location>
</feature>
<feature type="region of interest" description="Disordered" evidence="4">
    <location>
        <begin position="435"/>
        <end position="460"/>
    </location>
</feature>
<feature type="compositionally biased region" description="Polar residues" evidence="4">
    <location>
        <begin position="35"/>
        <end position="51"/>
    </location>
</feature>
<feature type="compositionally biased region" description="Low complexity" evidence="4">
    <location>
        <begin position="121"/>
        <end position="132"/>
    </location>
</feature>
<feature type="compositionally biased region" description="Basic and acidic residues" evidence="4">
    <location>
        <begin position="451"/>
        <end position="460"/>
    </location>
</feature>
<feature type="modified residue" description="Phosphoserine; by PKA" evidence="1">
    <location>
        <position position="258"/>
    </location>
</feature>
<feature type="cross-link" description="Glycyl lysine isopeptide (Lys-Gly) (interchain with G-Cter in SUMO)" evidence="1">
    <location>
        <position position="21"/>
    </location>
</feature>
<reference key="1">
    <citation type="submission" date="2003-01" db="EMBL/GenBank/DDBJ databases">
        <title>Canis familiaris transcription factor AP-2 beta mRNA, complete cds.</title>
        <authorList>
            <person name="Hashizume C."/>
            <person name="Takeuchi Y."/>
            <person name="Mori Y."/>
        </authorList>
    </citation>
    <scope>NUCLEOTIDE SEQUENCE [MRNA]</scope>
    <source>
        <strain>Beagle</strain>
        <tissue>Brain</tissue>
    </source>
</reference>
<gene>
    <name type="primary">TFAP2B</name>
</gene>
<evidence type="ECO:0000250" key="1"/>
<evidence type="ECO:0000250" key="2">
    <source>
        <dbReference type="UniProtKB" id="Q61313"/>
    </source>
</evidence>
<evidence type="ECO:0000250" key="3">
    <source>
        <dbReference type="UniProtKB" id="Q92481"/>
    </source>
</evidence>
<evidence type="ECO:0000256" key="4">
    <source>
        <dbReference type="SAM" id="MobiDB-lite"/>
    </source>
</evidence>
<evidence type="ECO:0000305" key="5"/>
<keyword id="KW-0010">Activator</keyword>
<keyword id="KW-0238">DNA-binding</keyword>
<keyword id="KW-1017">Isopeptide bond</keyword>
<keyword id="KW-0539">Nucleus</keyword>
<keyword id="KW-0597">Phosphoprotein</keyword>
<keyword id="KW-1185">Reference proteome</keyword>
<keyword id="KW-0804">Transcription</keyword>
<keyword id="KW-0805">Transcription regulation</keyword>
<keyword id="KW-0832">Ubl conjugation</keyword>
<proteinExistence type="evidence at transcript level"/>
<organism>
    <name type="scientific">Canis lupus familiaris</name>
    <name type="common">Dog</name>
    <name type="synonym">Canis familiaris</name>
    <dbReference type="NCBI Taxonomy" id="9615"/>
    <lineage>
        <taxon>Eukaryota</taxon>
        <taxon>Metazoa</taxon>
        <taxon>Chordata</taxon>
        <taxon>Craniata</taxon>
        <taxon>Vertebrata</taxon>
        <taxon>Euteleostomi</taxon>
        <taxon>Mammalia</taxon>
        <taxon>Eutheria</taxon>
        <taxon>Laurasiatheria</taxon>
        <taxon>Carnivora</taxon>
        <taxon>Caniformia</taxon>
        <taxon>Canidae</taxon>
        <taxon>Canis</taxon>
    </lineage>
</organism>
<name>AP2B_CANLF</name>
<dbReference type="EMBL" id="AB101212">
    <property type="protein sequence ID" value="BAC80223.1"/>
    <property type="status" value="ALT_INIT"/>
    <property type="molecule type" value="mRNA"/>
</dbReference>
<dbReference type="RefSeq" id="NP_001002977.1">
    <property type="nucleotide sequence ID" value="NM_001002977.1"/>
</dbReference>
<dbReference type="SMR" id="Q76HI7"/>
<dbReference type="FunCoup" id="Q76HI7">
    <property type="interactions" value="81"/>
</dbReference>
<dbReference type="STRING" id="9615.ENSCAFP00000055095"/>
<dbReference type="PaxDb" id="9612-ENSCAFP00000003144"/>
<dbReference type="Ensembl" id="ENSCAFT00040009886.1">
    <property type="protein sequence ID" value="ENSCAFP00040008572.1"/>
    <property type="gene ID" value="ENSCAFG00040005270.1"/>
</dbReference>
<dbReference type="GeneID" id="403463"/>
<dbReference type="KEGG" id="cfa:403463"/>
<dbReference type="CTD" id="7021"/>
<dbReference type="eggNOG" id="KOG3811">
    <property type="taxonomic scope" value="Eukaryota"/>
</dbReference>
<dbReference type="HOGENOM" id="CLU_035175_4_1_1"/>
<dbReference type="InParanoid" id="Q76HI7"/>
<dbReference type="OMA" id="NNNPNRH"/>
<dbReference type="OrthoDB" id="6252992at2759"/>
<dbReference type="TreeFam" id="TF313718"/>
<dbReference type="Reactome" id="R-CFA-8866904">
    <property type="pathway name" value="Negative regulation of activity of TFAP2 (AP-2) family transcription factors"/>
</dbReference>
<dbReference type="Reactome" id="R-CFA-8866907">
    <property type="pathway name" value="Activation of the TFAP2 (AP-2) family of transcription factors"/>
</dbReference>
<dbReference type="Reactome" id="R-CFA-9834899">
    <property type="pathway name" value="Specification of the neural plate border"/>
</dbReference>
<dbReference type="Proteomes" id="UP000002254">
    <property type="component" value="Unplaced"/>
</dbReference>
<dbReference type="Proteomes" id="UP000694429">
    <property type="component" value="Unplaced"/>
</dbReference>
<dbReference type="Proteomes" id="UP000694542">
    <property type="component" value="Chromosome 12"/>
</dbReference>
<dbReference type="Proteomes" id="UP000805418">
    <property type="component" value="Unplaced"/>
</dbReference>
<dbReference type="GO" id="GO:0005634">
    <property type="term" value="C:nucleus"/>
    <property type="evidence" value="ECO:0000250"/>
    <property type="project" value="UniProtKB"/>
</dbReference>
<dbReference type="GO" id="GO:0003682">
    <property type="term" value="F:chromatin binding"/>
    <property type="evidence" value="ECO:0000250"/>
    <property type="project" value="UniProtKB"/>
</dbReference>
<dbReference type="GO" id="GO:0001228">
    <property type="term" value="F:DNA-binding transcription activator activity, RNA polymerase II-specific"/>
    <property type="evidence" value="ECO:0000318"/>
    <property type="project" value="GO_Central"/>
</dbReference>
<dbReference type="GO" id="GO:0003700">
    <property type="term" value="F:DNA-binding transcription factor activity"/>
    <property type="evidence" value="ECO:0000250"/>
    <property type="project" value="UniProtKB"/>
</dbReference>
<dbReference type="GO" id="GO:0000981">
    <property type="term" value="F:DNA-binding transcription factor activity, RNA polymerase II-specific"/>
    <property type="evidence" value="ECO:0000250"/>
    <property type="project" value="UniProtKB"/>
</dbReference>
<dbReference type="GO" id="GO:0000977">
    <property type="term" value="F:RNA polymerase II transcription regulatory region sequence-specific DNA binding"/>
    <property type="evidence" value="ECO:0000318"/>
    <property type="project" value="GO_Central"/>
</dbReference>
<dbReference type="GO" id="GO:0043565">
    <property type="term" value="F:sequence-specific DNA binding"/>
    <property type="evidence" value="ECO:0000250"/>
    <property type="project" value="UniProtKB"/>
</dbReference>
<dbReference type="GO" id="GO:0000976">
    <property type="term" value="F:transcription cis-regulatory region binding"/>
    <property type="evidence" value="ECO:0000250"/>
    <property type="project" value="UniProtKB"/>
</dbReference>
<dbReference type="GO" id="GO:0035909">
    <property type="term" value="P:aorta morphogenesis"/>
    <property type="evidence" value="ECO:0000250"/>
    <property type="project" value="UniProtKB"/>
</dbReference>
<dbReference type="GO" id="GO:0072044">
    <property type="term" value="P:collecting duct development"/>
    <property type="evidence" value="ECO:0000250"/>
    <property type="project" value="UniProtKB"/>
</dbReference>
<dbReference type="GO" id="GO:0072017">
    <property type="term" value="P:distal tubule development"/>
    <property type="evidence" value="ECO:0000250"/>
    <property type="project" value="UniProtKB"/>
</dbReference>
<dbReference type="GO" id="GO:0097070">
    <property type="term" value="P:ductus arteriosus closure"/>
    <property type="evidence" value="ECO:0000250"/>
    <property type="project" value="UniProtKB"/>
</dbReference>
<dbReference type="GO" id="GO:0035136">
    <property type="term" value="P:forelimb morphogenesis"/>
    <property type="evidence" value="ECO:0000250"/>
    <property type="project" value="UniProtKB"/>
</dbReference>
<dbReference type="GO" id="GO:0006006">
    <property type="term" value="P:glucose metabolic process"/>
    <property type="evidence" value="ECO:0000250"/>
    <property type="project" value="UniProtKB"/>
</dbReference>
<dbReference type="GO" id="GO:0035137">
    <property type="term" value="P:hindlimb morphogenesis"/>
    <property type="evidence" value="ECO:0000250"/>
    <property type="project" value="UniProtKB"/>
</dbReference>
<dbReference type="GO" id="GO:0001822">
    <property type="term" value="P:kidney development"/>
    <property type="evidence" value="ECO:0000250"/>
    <property type="project" value="UniProtKB"/>
</dbReference>
<dbReference type="GO" id="GO:0043066">
    <property type="term" value="P:negative regulation of apoptotic process"/>
    <property type="evidence" value="ECO:0000250"/>
    <property type="project" value="UniProtKB"/>
</dbReference>
<dbReference type="GO" id="GO:0008285">
    <property type="term" value="P:negative regulation of cell population proliferation"/>
    <property type="evidence" value="ECO:0000250"/>
    <property type="project" value="UniProtKB"/>
</dbReference>
<dbReference type="GO" id="GO:0045892">
    <property type="term" value="P:negative regulation of DNA-templated transcription"/>
    <property type="evidence" value="ECO:0000250"/>
    <property type="project" value="UniProtKB"/>
</dbReference>
<dbReference type="GO" id="GO:0000122">
    <property type="term" value="P:negative regulation of transcription by RNA polymerase II"/>
    <property type="evidence" value="ECO:0000250"/>
    <property type="project" value="UniProtKB"/>
</dbReference>
<dbReference type="GO" id="GO:0007399">
    <property type="term" value="P:nervous system development"/>
    <property type="evidence" value="ECO:0000318"/>
    <property type="project" value="GO_Central"/>
</dbReference>
<dbReference type="GO" id="GO:0008284">
    <property type="term" value="P:positive regulation of cell population proliferation"/>
    <property type="evidence" value="ECO:0000250"/>
    <property type="project" value="UniProtKB"/>
</dbReference>
<dbReference type="GO" id="GO:0045893">
    <property type="term" value="P:positive regulation of DNA-templated transcription"/>
    <property type="evidence" value="ECO:0000250"/>
    <property type="project" value="UniProtKB"/>
</dbReference>
<dbReference type="GO" id="GO:0010628">
    <property type="term" value="P:positive regulation of gene expression"/>
    <property type="evidence" value="ECO:0000250"/>
    <property type="project" value="UniProtKB"/>
</dbReference>
<dbReference type="GO" id="GO:0043525">
    <property type="term" value="P:positive regulation of neuron apoptotic process"/>
    <property type="evidence" value="ECO:0000250"/>
    <property type="project" value="UniProtKB"/>
</dbReference>
<dbReference type="GO" id="GO:0045944">
    <property type="term" value="P:positive regulation of transcription by RNA polymerase II"/>
    <property type="evidence" value="ECO:0000250"/>
    <property type="project" value="UniProtKB"/>
</dbReference>
<dbReference type="GO" id="GO:0030510">
    <property type="term" value="P:regulation of BMP signaling pathway"/>
    <property type="evidence" value="ECO:0000250"/>
    <property type="project" value="UniProtKB"/>
</dbReference>
<dbReference type="GO" id="GO:0045595">
    <property type="term" value="P:regulation of cell differentiation"/>
    <property type="evidence" value="ECO:0000250"/>
    <property type="project" value="UniProtKB"/>
</dbReference>
<dbReference type="GO" id="GO:0042127">
    <property type="term" value="P:regulation of cell population proliferation"/>
    <property type="evidence" value="ECO:0000318"/>
    <property type="project" value="GO_Central"/>
</dbReference>
<dbReference type="GO" id="GO:0050796">
    <property type="term" value="P:regulation of insulin secretion"/>
    <property type="evidence" value="ECO:0000250"/>
    <property type="project" value="UniProtKB"/>
</dbReference>
<dbReference type="GO" id="GO:0006357">
    <property type="term" value="P:regulation of transcription by RNA polymerase II"/>
    <property type="evidence" value="ECO:0000250"/>
    <property type="project" value="UniProtKB"/>
</dbReference>
<dbReference type="GO" id="GO:0048485">
    <property type="term" value="P:sympathetic nervous system development"/>
    <property type="evidence" value="ECO:0000250"/>
    <property type="project" value="UniProtKB"/>
</dbReference>
<dbReference type="InterPro" id="IPR004979">
    <property type="entry name" value="TF_AP2"/>
</dbReference>
<dbReference type="InterPro" id="IPR008122">
    <property type="entry name" value="TF_AP2_beta"/>
</dbReference>
<dbReference type="InterPro" id="IPR013854">
    <property type="entry name" value="TF_AP2_C"/>
</dbReference>
<dbReference type="PANTHER" id="PTHR10812">
    <property type="entry name" value="TRANSCRIPTION FACTOR AP-2"/>
    <property type="match status" value="1"/>
</dbReference>
<dbReference type="PANTHER" id="PTHR10812:SF14">
    <property type="entry name" value="TRANSCRIPTION FACTOR AP-2-BETA"/>
    <property type="match status" value="1"/>
</dbReference>
<dbReference type="Pfam" id="PF03299">
    <property type="entry name" value="TF_AP-2"/>
    <property type="match status" value="1"/>
</dbReference>
<dbReference type="PRINTS" id="PR01750">
    <property type="entry name" value="AP2BTNSCPFCT"/>
</dbReference>
<dbReference type="PRINTS" id="PR01748">
    <property type="entry name" value="AP2TNSCPFCT"/>
</dbReference>
<accession>Q76HI7</accession>
<sequence>MHSPPRDQAAIMLWKLVENVKYEDIYEDRHDGVPSHSSRLSQLGSVSQGPYSSAPPLSHTPSSDFQPPYFPPPYQPLPYHQSQDPYSHVNDPYSLNPLHQPQQHPWGQRQRQEVGSEAGSLLPQPRAALPQLSGLDPRRDYHSVRRPDVLLHSAHHGLDAGMGDSLSLHGLGHPGMEDVQSVEDANNSGMNLLDQSVIKKVPVPPKSVTSLMMNKDGFLGGMSVNTGEVFCSVPGRLSLLSSTSKYKVTVGEVQRRLSPPECLNASLLGGVLRRAKSKNGGRSLRERLEKIGLNLPAGRRKAANVTLLTSLVEGEAVHLARDFGYICETEFPAKAVSEYLNRQHTDPSDLHSRKNMLLATKQLCKEFTDLLAQDRTPIGNSRPSPILEPGIQSCLTHFSLITHGFGAPAICAALTALQNYLTEALKGMDKMFLNNTTTNRHTSGEGPGSKTGDKEEKHRK</sequence>